<name>RALA_SAGOE</name>
<feature type="chain" id="PRO_0000082696" description="Ras-related protein Ral-A">
    <location>
        <begin position="1"/>
        <end position="203"/>
    </location>
</feature>
<feature type="propeptide" id="PRO_0000281347" description="Removed in mature form" evidence="1">
    <location>
        <begin position="204"/>
        <end position="206"/>
    </location>
</feature>
<feature type="short sequence motif" description="Effector region">
    <location>
        <begin position="43"/>
        <end position="51"/>
    </location>
</feature>
<feature type="binding site">
    <location>
        <begin position="21"/>
        <end position="29"/>
    </location>
    <ligand>
        <name>GTP</name>
        <dbReference type="ChEBI" id="CHEBI:37565"/>
    </ligand>
</feature>
<feature type="binding site">
    <location>
        <begin position="127"/>
        <end position="130"/>
    </location>
    <ligand>
        <name>GTP</name>
        <dbReference type="ChEBI" id="CHEBI:37565"/>
    </ligand>
</feature>
<feature type="modified residue" description="Phosphoserine" evidence="2">
    <location>
        <position position="194"/>
    </location>
</feature>
<feature type="modified residue" description="Cysteine methyl ester" evidence="1">
    <location>
        <position position="203"/>
    </location>
</feature>
<feature type="lipid moiety-binding region" description="S-geranylgeranyl cysteine" evidence="1">
    <location>
        <position position="203"/>
    </location>
</feature>
<feature type="strand" evidence="5">
    <location>
        <begin position="14"/>
        <end position="20"/>
    </location>
</feature>
<feature type="helix" evidence="5">
    <location>
        <begin position="27"/>
        <end position="36"/>
    </location>
</feature>
<feature type="strand" evidence="5">
    <location>
        <begin position="49"/>
        <end position="57"/>
    </location>
</feature>
<feature type="strand" evidence="5">
    <location>
        <begin position="60"/>
        <end position="68"/>
    </location>
</feature>
<feature type="helix" evidence="5">
    <location>
        <begin position="76"/>
        <end position="85"/>
    </location>
</feature>
<feature type="strand" evidence="5">
    <location>
        <begin position="87"/>
        <end position="94"/>
    </location>
</feature>
<feature type="helix" evidence="5">
    <location>
        <begin position="98"/>
        <end position="115"/>
    </location>
</feature>
<feature type="strand" evidence="5">
    <location>
        <begin position="122"/>
        <end position="127"/>
    </location>
</feature>
<feature type="helix" evidence="5">
    <location>
        <begin position="129"/>
        <end position="134"/>
    </location>
</feature>
<feature type="helix" evidence="5">
    <location>
        <begin position="139"/>
        <end position="149"/>
    </location>
</feature>
<feature type="strand" evidence="5">
    <location>
        <begin position="152"/>
        <end position="155"/>
    </location>
</feature>
<feature type="turn" evidence="5">
    <location>
        <begin position="158"/>
        <end position="160"/>
    </location>
</feature>
<feature type="helix" evidence="5">
    <location>
        <begin position="164"/>
        <end position="176"/>
    </location>
</feature>
<sequence length="206" mass="23553">MAANKPKGQNSLALHKVIMVGSGGVGKSALTLQFMYDEFVEDYEPTKADSYRKKVVLDGEEVQIDILDTAGQEDYAAIRDNYFRSGEGFLCVFSITEMESFAATADFREQILRVKEDENVPFLLVGNKSDLEDKRQVSVEEAKNRADQWNVNYVETSAKTRANVDKVFFDLMREIRARKMEDSKEKNGKKKRKSLAKRIRERCCIL</sequence>
<keyword id="KW-0002">3D-structure</keyword>
<keyword id="KW-0131">Cell cycle</keyword>
<keyword id="KW-0132">Cell division</keyword>
<keyword id="KW-1003">Cell membrane</keyword>
<keyword id="KW-0268">Exocytosis</keyword>
<keyword id="KW-0342">GTP-binding</keyword>
<keyword id="KW-0378">Hydrolase</keyword>
<keyword id="KW-0449">Lipoprotein</keyword>
<keyword id="KW-0472">Membrane</keyword>
<keyword id="KW-0488">Methylation</keyword>
<keyword id="KW-0496">Mitochondrion</keyword>
<keyword id="KW-0547">Nucleotide-binding</keyword>
<keyword id="KW-0597">Phosphoprotein</keyword>
<keyword id="KW-0636">Prenylation</keyword>
<evidence type="ECO:0000250" key="1"/>
<evidence type="ECO:0000250" key="2">
    <source>
        <dbReference type="UniProtKB" id="P11233"/>
    </source>
</evidence>
<evidence type="ECO:0000250" key="3">
    <source>
        <dbReference type="UniProtKB" id="P63322"/>
    </source>
</evidence>
<evidence type="ECO:0000305" key="4"/>
<evidence type="ECO:0007829" key="5">
    <source>
        <dbReference type="PDB" id="1U8Z"/>
    </source>
</evidence>
<accession>P63320</accession>
<accession>P05810</accession>
<reference key="1">
    <citation type="journal article" date="1986" name="EMBO J.">
        <title>The ral gene: a new ras related gene isolated by the use of a synthetic probe.</title>
        <authorList>
            <person name="Chardin P."/>
            <person name="Tavitian A."/>
        </authorList>
    </citation>
    <scope>NUCLEOTIDE SEQUENCE [MRNA]</scope>
    <source>
        <tissue>B-cell</tissue>
    </source>
</reference>
<reference key="2">
    <citation type="journal article" date="2004" name="Structure">
        <title>Crystal structures of Ral-GppNHp and Ral-GDP reveal two binding sites that are also present in Ras and Rap.</title>
        <authorList>
            <person name="Nicely N.I."/>
            <person name="Kosak J."/>
            <person name="de Serrano V."/>
            <person name="Mattos C."/>
        </authorList>
    </citation>
    <scope>X-RAY CRYSTALLOGRAPHY (1.5 ANGSTROMS) OF 11-178 IN COMPLEX WITH GTP ANALOG</scope>
</reference>
<comment type="function">
    <text evidence="2">Multifunctional GTPase involved in a variety of cellular processes including gene expression, cell migration, cell proliferation, oncogenic transformation and membrane trafficking. Accomplishes its multiple functions by interacting with distinct downstream effectors. Acts as a GTP sensor for GTP-dependent exocytosis of dense core vesicles. The RALA-exocyst complex regulates integrin-dependent membrane raft exocytosis and growth signaling. Key regulator of LPAR1 signaling and competes with GRK2 for binding to LPAR1 thus affecting the signaling properties of the receptor. Required for anchorage-independent proliferation of transformed cells. During mitosis, supports the stabilization and elongation of the intracellular bridge between dividing cells. Cooperates with EXOC2 to recruit other components of the exocyst to the early midbody. During mitosis, also controls mitochondrial fission by recruiting to the mitochondrion RALBP1, which mediates the phosphorylation and activation of DNM1L by the mitotic kinase cyclin B-CDK1 (By similarity).</text>
</comment>
<comment type="catalytic activity">
    <reaction evidence="2">
        <text>GTP + H2O = GDP + phosphate + H(+)</text>
        <dbReference type="Rhea" id="RHEA:19669"/>
        <dbReference type="ChEBI" id="CHEBI:15377"/>
        <dbReference type="ChEBI" id="CHEBI:15378"/>
        <dbReference type="ChEBI" id="CHEBI:37565"/>
        <dbReference type="ChEBI" id="CHEBI:43474"/>
        <dbReference type="ChEBI" id="CHEBI:58189"/>
        <dbReference type="EC" id="3.6.5.2"/>
    </reaction>
    <physiologicalReaction direction="left-to-right" evidence="2">
        <dbReference type="Rhea" id="RHEA:19670"/>
    </physiologicalReaction>
</comment>
<comment type="activity regulation">
    <text>Alternates between an inactive form bound to GDP and an active form bound to GTP. Activated by a guanine nucleotide-exchange factor (GEF) and inactivated by a GTPase-activating protein (GAP).</text>
</comment>
<comment type="subunit">
    <text evidence="2 3">Interacts (via effector domain) with RALBP1; during mitosis, recruits RALBP1 to the mitochondrion where it promotes DNM1L phosphorylation and mitochondrial fission (By similarity). Interacts with EXOC2/Sec5 and EXOC8/Exo84; binding to EXOC2 and EXOC8 is mutually exclusive. Interacts with Clostridium exoenzyme C3. Interacts with RALGPS1. Interacts with LPAR1 and LPAR2. Interacts with GRK2 in response to LPAR1 activation. RALA and GRK2 binding to LPAR1 is mutually exclusive (By similarity). Interacts with CDC42 (By similarity).</text>
</comment>
<comment type="subcellular location">
    <subcellularLocation>
        <location evidence="2">Cell membrane</location>
        <topology evidence="2">Lipid-anchor</topology>
        <orientation evidence="2">Cytoplasmic side</orientation>
    </subcellularLocation>
    <subcellularLocation>
        <location evidence="2">Cleavage furrow</location>
    </subcellularLocation>
    <subcellularLocation>
        <location evidence="2">Midbody</location>
        <location evidence="2">Midbody ring</location>
    </subcellularLocation>
    <subcellularLocation>
        <location evidence="2">Mitochondrion</location>
    </subcellularLocation>
    <text evidence="2">Predominantly at the cell surface in the absence of LPA. In the presence of LPA, colocalizes with LPAR1 and LPAR2 in endocytic vesicles. May colocalize with CNTRL/centriolin at the midbody ring. However, localization at the midbody at late cytokinesis was not confirmed. Relocalizes to the mitochondrion during mitosis where it regulates mitochondrial fission.</text>
</comment>
<comment type="PTM">
    <text evidence="2">Prenylation is essential for membrane localization.</text>
</comment>
<comment type="PTM">
    <text evidence="2">Phosphorylated. Phosphorylation at Ser-194 by AURKA/Aurora kinase A, during mitosis, induces RALA localization to the mitochondrion where it regulates mitochondrial fission.</text>
</comment>
<comment type="similarity">
    <text evidence="4">Belongs to the small GTPase superfamily. Ras family.</text>
</comment>
<proteinExistence type="evidence at protein level"/>
<dbReference type="EC" id="3.6.5.2" evidence="2"/>
<dbReference type="EMBL" id="X04328">
    <property type="protein sequence ID" value="CAA27859.1"/>
    <property type="molecule type" value="mRNA"/>
</dbReference>
<dbReference type="PDB" id="1U8Y">
    <property type="method" value="X-ray"/>
    <property type="resolution" value="1.55 A"/>
    <property type="chains" value="A/B=11-178"/>
</dbReference>
<dbReference type="PDB" id="1U8Z">
    <property type="method" value="X-ray"/>
    <property type="resolution" value="1.50 A"/>
    <property type="chains" value="A/B=11-178"/>
</dbReference>
<dbReference type="PDB" id="1U90">
    <property type="method" value="X-ray"/>
    <property type="resolution" value="2.00 A"/>
    <property type="chains" value="A/B=11-178"/>
</dbReference>
<dbReference type="PDBsum" id="1U8Y"/>
<dbReference type="PDBsum" id="1U8Z"/>
<dbReference type="PDBsum" id="1U90"/>
<dbReference type="SMR" id="P63320"/>
<dbReference type="EvolutionaryTrace" id="P63320"/>
<dbReference type="GO" id="GO:0032154">
    <property type="term" value="C:cleavage furrow"/>
    <property type="evidence" value="ECO:0000250"/>
    <property type="project" value="UniProtKB"/>
</dbReference>
<dbReference type="GO" id="GO:0090543">
    <property type="term" value="C:Flemming body"/>
    <property type="evidence" value="ECO:0007669"/>
    <property type="project" value="UniProtKB-SubCell"/>
</dbReference>
<dbReference type="GO" id="GO:0005739">
    <property type="term" value="C:mitochondrion"/>
    <property type="evidence" value="ECO:0000250"/>
    <property type="project" value="UniProtKB"/>
</dbReference>
<dbReference type="GO" id="GO:0005886">
    <property type="term" value="C:plasma membrane"/>
    <property type="evidence" value="ECO:0000250"/>
    <property type="project" value="UniProtKB"/>
</dbReference>
<dbReference type="GO" id="GO:0031755">
    <property type="term" value="F:Edg-2 lysophosphatidic acid receptor binding"/>
    <property type="evidence" value="ECO:0000250"/>
    <property type="project" value="UniProtKB"/>
</dbReference>
<dbReference type="GO" id="GO:0003925">
    <property type="term" value="F:G protein activity"/>
    <property type="evidence" value="ECO:0007669"/>
    <property type="project" value="UniProtKB-EC"/>
</dbReference>
<dbReference type="GO" id="GO:0005525">
    <property type="term" value="F:GTP binding"/>
    <property type="evidence" value="ECO:0000314"/>
    <property type="project" value="UniProtKB"/>
</dbReference>
<dbReference type="GO" id="GO:0051301">
    <property type="term" value="P:cell division"/>
    <property type="evidence" value="ECO:0007669"/>
    <property type="project" value="UniProtKB-KW"/>
</dbReference>
<dbReference type="GO" id="GO:0072655">
    <property type="term" value="P:establishment of protein localization to mitochondrion"/>
    <property type="evidence" value="ECO:0000250"/>
    <property type="project" value="UniProtKB"/>
</dbReference>
<dbReference type="GO" id="GO:0006887">
    <property type="term" value="P:exocytosis"/>
    <property type="evidence" value="ECO:0007669"/>
    <property type="project" value="UniProtKB-KW"/>
</dbReference>
<dbReference type="GO" id="GO:0051665">
    <property type="term" value="P:membrane raft localization"/>
    <property type="evidence" value="ECO:0000250"/>
    <property type="project" value="UniProtKB"/>
</dbReference>
<dbReference type="GO" id="GO:0090141">
    <property type="term" value="P:positive regulation of mitochondrial fission"/>
    <property type="evidence" value="ECO:0000250"/>
    <property type="project" value="UniProtKB"/>
</dbReference>
<dbReference type="GO" id="GO:0017157">
    <property type="term" value="P:regulation of exocytosis"/>
    <property type="evidence" value="ECO:0000250"/>
    <property type="project" value="UniProtKB"/>
</dbReference>
<dbReference type="GO" id="GO:0007165">
    <property type="term" value="P:signal transduction"/>
    <property type="evidence" value="ECO:0007669"/>
    <property type="project" value="InterPro"/>
</dbReference>
<dbReference type="CDD" id="cd04139">
    <property type="entry name" value="RalA_RalB"/>
    <property type="match status" value="1"/>
</dbReference>
<dbReference type="FunFam" id="3.40.50.300:FF:000203">
    <property type="entry name" value="Putative ras-related protein ral-a"/>
    <property type="match status" value="1"/>
</dbReference>
<dbReference type="Gene3D" id="3.40.50.300">
    <property type="entry name" value="P-loop containing nucleotide triphosphate hydrolases"/>
    <property type="match status" value="1"/>
</dbReference>
<dbReference type="InterPro" id="IPR027417">
    <property type="entry name" value="P-loop_NTPase"/>
</dbReference>
<dbReference type="InterPro" id="IPR005225">
    <property type="entry name" value="Small_GTP-bd"/>
</dbReference>
<dbReference type="InterPro" id="IPR001806">
    <property type="entry name" value="Small_GTPase"/>
</dbReference>
<dbReference type="InterPro" id="IPR020849">
    <property type="entry name" value="Small_GTPase_Ras-type"/>
</dbReference>
<dbReference type="NCBIfam" id="TIGR00231">
    <property type="entry name" value="small_GTP"/>
    <property type="match status" value="1"/>
</dbReference>
<dbReference type="PANTHER" id="PTHR24070">
    <property type="entry name" value="RAS, DI-RAS, AND RHEB FAMILY MEMBERS OF SMALL GTPASE SUPERFAMILY"/>
    <property type="match status" value="1"/>
</dbReference>
<dbReference type="Pfam" id="PF00071">
    <property type="entry name" value="Ras"/>
    <property type="match status" value="1"/>
</dbReference>
<dbReference type="PRINTS" id="PR00449">
    <property type="entry name" value="RASTRNSFRMNG"/>
</dbReference>
<dbReference type="SMART" id="SM00175">
    <property type="entry name" value="RAB"/>
    <property type="match status" value="1"/>
</dbReference>
<dbReference type="SMART" id="SM00176">
    <property type="entry name" value="RAN"/>
    <property type="match status" value="1"/>
</dbReference>
<dbReference type="SMART" id="SM00173">
    <property type="entry name" value="RAS"/>
    <property type="match status" value="1"/>
</dbReference>
<dbReference type="SMART" id="SM00174">
    <property type="entry name" value="RHO"/>
    <property type="match status" value="1"/>
</dbReference>
<dbReference type="SUPFAM" id="SSF52540">
    <property type="entry name" value="P-loop containing nucleoside triphosphate hydrolases"/>
    <property type="match status" value="1"/>
</dbReference>
<dbReference type="PROSITE" id="PS51421">
    <property type="entry name" value="RAS"/>
    <property type="match status" value="1"/>
</dbReference>
<organism>
    <name type="scientific">Saguinus oedipus</name>
    <name type="common">Cotton-top tamarin</name>
    <dbReference type="NCBI Taxonomy" id="9490"/>
    <lineage>
        <taxon>Eukaryota</taxon>
        <taxon>Metazoa</taxon>
        <taxon>Chordata</taxon>
        <taxon>Craniata</taxon>
        <taxon>Vertebrata</taxon>
        <taxon>Euteleostomi</taxon>
        <taxon>Mammalia</taxon>
        <taxon>Eutheria</taxon>
        <taxon>Euarchontoglires</taxon>
        <taxon>Primates</taxon>
        <taxon>Haplorrhini</taxon>
        <taxon>Platyrrhini</taxon>
        <taxon>Cebidae</taxon>
        <taxon>Callitrichinae</taxon>
        <taxon>Saguinus</taxon>
    </lineage>
</organism>
<gene>
    <name type="primary">RALA</name>
    <name type="synonym">RAL</name>
</gene>
<protein>
    <recommendedName>
        <fullName>Ras-related protein Ral-A</fullName>
        <ecNumber evidence="2">3.6.5.2</ecNumber>
    </recommendedName>
</protein>